<proteinExistence type="inferred from homology"/>
<evidence type="ECO:0000250" key="1"/>
<evidence type="ECO:0000255" key="2">
    <source>
        <dbReference type="PROSITE-ProRule" id="PRU00541"/>
    </source>
</evidence>
<evidence type="ECO:0000255" key="3">
    <source>
        <dbReference type="PROSITE-ProRule" id="PRU00542"/>
    </source>
</evidence>
<evidence type="ECO:0000255" key="4">
    <source>
        <dbReference type="PROSITE-ProRule" id="PRU00549"/>
    </source>
</evidence>
<evidence type="ECO:0000256" key="5">
    <source>
        <dbReference type="SAM" id="MobiDB-lite"/>
    </source>
</evidence>
<evidence type="ECO:0000305" key="6"/>
<gene>
    <name type="primary">swr1</name>
    <name type="ORF">AFUA_7G02370</name>
</gene>
<organism>
    <name type="scientific">Aspergillus fumigatus (strain ATCC MYA-4609 / CBS 101355 / FGSC A1100 / Af293)</name>
    <name type="common">Neosartorya fumigata</name>
    <dbReference type="NCBI Taxonomy" id="330879"/>
    <lineage>
        <taxon>Eukaryota</taxon>
        <taxon>Fungi</taxon>
        <taxon>Dikarya</taxon>
        <taxon>Ascomycota</taxon>
        <taxon>Pezizomycotina</taxon>
        <taxon>Eurotiomycetes</taxon>
        <taxon>Eurotiomycetidae</taxon>
        <taxon>Eurotiales</taxon>
        <taxon>Aspergillaceae</taxon>
        <taxon>Aspergillus</taxon>
        <taxon>Aspergillus subgen. Fumigati</taxon>
    </lineage>
</organism>
<reference key="1">
    <citation type="journal article" date="2005" name="Nature">
        <title>Genomic sequence of the pathogenic and allergenic filamentous fungus Aspergillus fumigatus.</title>
        <authorList>
            <person name="Nierman W.C."/>
            <person name="Pain A."/>
            <person name="Anderson M.J."/>
            <person name="Wortman J.R."/>
            <person name="Kim H.S."/>
            <person name="Arroyo J."/>
            <person name="Berriman M."/>
            <person name="Abe K."/>
            <person name="Archer D.B."/>
            <person name="Bermejo C."/>
            <person name="Bennett J.W."/>
            <person name="Bowyer P."/>
            <person name="Chen D."/>
            <person name="Collins M."/>
            <person name="Coulsen R."/>
            <person name="Davies R."/>
            <person name="Dyer P.S."/>
            <person name="Farman M.L."/>
            <person name="Fedorova N."/>
            <person name="Fedorova N.D."/>
            <person name="Feldblyum T.V."/>
            <person name="Fischer R."/>
            <person name="Fosker N."/>
            <person name="Fraser A."/>
            <person name="Garcia J.L."/>
            <person name="Garcia M.J."/>
            <person name="Goble A."/>
            <person name="Goldman G.H."/>
            <person name="Gomi K."/>
            <person name="Griffith-Jones S."/>
            <person name="Gwilliam R."/>
            <person name="Haas B.J."/>
            <person name="Haas H."/>
            <person name="Harris D.E."/>
            <person name="Horiuchi H."/>
            <person name="Huang J."/>
            <person name="Humphray S."/>
            <person name="Jimenez J."/>
            <person name="Keller N."/>
            <person name="Khouri H."/>
            <person name="Kitamoto K."/>
            <person name="Kobayashi T."/>
            <person name="Konzack S."/>
            <person name="Kulkarni R."/>
            <person name="Kumagai T."/>
            <person name="Lafton A."/>
            <person name="Latge J.-P."/>
            <person name="Li W."/>
            <person name="Lord A."/>
            <person name="Lu C."/>
            <person name="Majoros W.H."/>
            <person name="May G.S."/>
            <person name="Miller B.L."/>
            <person name="Mohamoud Y."/>
            <person name="Molina M."/>
            <person name="Monod M."/>
            <person name="Mouyna I."/>
            <person name="Mulligan S."/>
            <person name="Murphy L.D."/>
            <person name="O'Neil S."/>
            <person name="Paulsen I."/>
            <person name="Penalva M.A."/>
            <person name="Pertea M."/>
            <person name="Price C."/>
            <person name="Pritchard B.L."/>
            <person name="Quail M.A."/>
            <person name="Rabbinowitsch E."/>
            <person name="Rawlins N."/>
            <person name="Rajandream M.A."/>
            <person name="Reichard U."/>
            <person name="Renauld H."/>
            <person name="Robson G.D."/>
            <person name="Rodriguez de Cordoba S."/>
            <person name="Rodriguez-Pena J.M."/>
            <person name="Ronning C.M."/>
            <person name="Rutter S."/>
            <person name="Salzberg S.L."/>
            <person name="Sanchez M."/>
            <person name="Sanchez-Ferrero J.C."/>
            <person name="Saunders D."/>
            <person name="Seeger K."/>
            <person name="Squares R."/>
            <person name="Squares S."/>
            <person name="Takeuchi M."/>
            <person name="Tekaia F."/>
            <person name="Turner G."/>
            <person name="Vazquez de Aldana C.R."/>
            <person name="Weidman J."/>
            <person name="White O."/>
            <person name="Woodward J.R."/>
            <person name="Yu J.-H."/>
            <person name="Fraser C.M."/>
            <person name="Galagan J.E."/>
            <person name="Asai K."/>
            <person name="Machida M."/>
            <person name="Hall N."/>
            <person name="Barrell B.G."/>
            <person name="Denning D.W."/>
        </authorList>
    </citation>
    <scope>NUCLEOTIDE SEQUENCE [LARGE SCALE GENOMIC DNA]</scope>
    <source>
        <strain>ATCC MYA-4609 / CBS 101355 / FGSC A1100 / Af293</strain>
    </source>
</reference>
<keyword id="KW-0010">Activator</keyword>
<keyword id="KW-0067">ATP-binding</keyword>
<keyword id="KW-0156">Chromatin regulator</keyword>
<keyword id="KW-0238">DNA-binding</keyword>
<keyword id="KW-0347">Helicase</keyword>
<keyword id="KW-0378">Hydrolase</keyword>
<keyword id="KW-0547">Nucleotide-binding</keyword>
<keyword id="KW-0539">Nucleus</keyword>
<keyword id="KW-1185">Reference proteome</keyword>
<keyword id="KW-0804">Transcription</keyword>
<keyword id="KW-0805">Transcription regulation</keyword>
<sequence length="1695" mass="191097">MQDGSLNGLSHHNDERVNHENEDKSLNTSALGDSPDSANRELIPSESKENGVPTDSIEGPPSKRRKLAGPDNSRRSTPRPPSPPWKKAGVDGPTSFLQDGKRRSSRVNAIPLELQPPSDKRKTRAAQRSTVNKNLSGNGKVVASSPLSMSVSQSGINGKHTGGNLTTGSPRTATPRGASARRRRISRSPPRQTPSRTRSQSSATSAPNDPTSHNARSKRSHSNVTSTPTIGIDELWNDIGGETDLGDEQGQRVPRLRIKVKKPVIGFQHPSHVIPPRKYNSFREWLESGEGRIEDGAVLTPEAALVEARKRCRVLEATEPGGLLSPEVCSAYLPEQQEEPPQQYSHQDHLVAHALYFKKLLDQEHRRHRNTARLLAQWCADAWRKRNKRPEDILREQQEEVRVKRKQLARDLQKMFDLARAEVDRMRLARWEEERKVEDQRALDRAIKQSTMLFEKRRLEILGETGSDFLDSTDAEESGTDATTSDAEEDESNMSSTDSETEDEDEVDDDEGLTAEELRQKYADLPQSSLVSDRESVASDTSESSDGTRTSHILQNIEDINDSQGETPLEQIELDEVDPMLLDDSEDESTDMDDDMGDSDEDGDADGTDSDDESDDGPGLLGFFSSKDRVLNDAHRFDDEGDDPLAVSNHEGGSGFDDDGQSVSVDEDGDEELEDADEVSLVPNGPSNSVSISQSTAEVSPVTETPDEEPDEQAEVVDTDMAAAAPSEGPAPLEASAPLEDLVAIDKRGDAMGECHRQQCSPLVNNLDEQELRQNGGASSEASPGTLATKPSEPESISSFEAPGEKPPQPSESPAPGLKTPIPHLLRGTLREYQHYGLDWLAGLYNNHINGILADEMGLGKTIQTIALLAHLAVEHEVWGPHLVVVPTSVILNWEMEFKKWCPGFKIMTYYGSIEERRQKRKGWTDDTSWNVLITSYQLVLQDQQVLKRRNWHYMVLDEAHNIKNFRSQKWQTLLTFRTRARLLLTGTPLQNNLTELWSLLFFLMPSDGDGTGIEGFADLRNFSEWFRRPVEQILEHGRETMDDETKRVVTKLHTILRPYILRRLKADVEKQMPAKYEHVVYCRLSKRQRFLYDGFMSMAQTKETLASGNYLSIINCLMQLRKVCNHPDLFETRQISTSFVMHHSVATEYASKEQLVRRRLLYEHPLTKLDLDFLNLVPISREDISRRLADDSTRLMAYGPFNILRERQYKRTNWQMMFDGSTVQSTLEALENDARKRRMAELERCLYFESKRHGRRPVYGTSLVEFLTADSKQKPTLGGRPQTQSLAEWLSNRSSILASMILSIEERSQAMDGYVRRFACVTPAAVASGITEAALTPIETRYLTEKERFPPYDPFHEAQMRLSIAFPDKRLLQYDCGKLQRLDKLLRDLKAGGHRALIFTQMTKMLDILEQFLNIHGHRYLRLDGTTKVEQRQILTDRFNNDDRILVFILSSRSGGLGINLTGADTVIFYDLDWNPAMDKQCQDRCHRIGQTRDVHIYRFVSEHTIESNILRKANQKRMLDDVVIQEGEFTTDYFTKLDVRDMIGEEAEAQDEASAAMDRVLSSRVATGGSRVFEQAEDKEDIDAAKNAQKEMEQADNDDFGDRSISHTPGQVGTPLATGPQEGETPGAQLITTPQIHGVDETVDVEPQPGHIDDYLLRFMEWNMKDEPLVLPPDKTKKKSKKGKEHRLSKRRR</sequence>
<comment type="function">
    <text evidence="1">Catalytic component of the SWR1 complex which mediates the ATP-dependent exchange of histone H2A for the H2A variant HZT1 leading to transcriptional regulation of selected genes by chromatin remodeling.</text>
</comment>
<comment type="catalytic activity">
    <reaction>
        <text>ATP + H2O = ADP + phosphate + H(+)</text>
        <dbReference type="Rhea" id="RHEA:13065"/>
        <dbReference type="ChEBI" id="CHEBI:15377"/>
        <dbReference type="ChEBI" id="CHEBI:15378"/>
        <dbReference type="ChEBI" id="CHEBI:30616"/>
        <dbReference type="ChEBI" id="CHEBI:43474"/>
        <dbReference type="ChEBI" id="CHEBI:456216"/>
        <dbReference type="EC" id="3.6.4.12"/>
    </reaction>
</comment>
<comment type="subunit">
    <text evidence="1">Component of the SWR1 chromatin-remodeling complex.</text>
</comment>
<comment type="subcellular location">
    <subcellularLocation>
        <location evidence="4">Nucleus</location>
    </subcellularLocation>
</comment>
<comment type="similarity">
    <text evidence="6">Belongs to the SNF2/RAD54 helicase family. SWR1 subfamily.</text>
</comment>
<protein>
    <recommendedName>
        <fullName>Helicase swr1</fullName>
        <ecNumber>3.6.4.12</ecNumber>
    </recommendedName>
</protein>
<accession>Q4WAS9</accession>
<feature type="chain" id="PRO_0000074363" description="Helicase swr1">
    <location>
        <begin position="1"/>
        <end position="1695"/>
    </location>
</feature>
<feature type="domain" description="HSA" evidence="4">
    <location>
        <begin position="334"/>
        <end position="408"/>
    </location>
</feature>
<feature type="domain" description="Helicase ATP-binding" evidence="2">
    <location>
        <begin position="842"/>
        <end position="1007"/>
    </location>
</feature>
<feature type="domain" description="Helicase C-terminal" evidence="3">
    <location>
        <begin position="1382"/>
        <end position="1532"/>
    </location>
</feature>
<feature type="region of interest" description="Disordered" evidence="5">
    <location>
        <begin position="1"/>
        <end position="229"/>
    </location>
</feature>
<feature type="region of interest" description="Disordered" evidence="5">
    <location>
        <begin position="467"/>
        <end position="738"/>
    </location>
</feature>
<feature type="region of interest" description="Disordered" evidence="5">
    <location>
        <begin position="772"/>
        <end position="821"/>
    </location>
</feature>
<feature type="region of interest" description="Disordered" evidence="5">
    <location>
        <begin position="1590"/>
        <end position="1625"/>
    </location>
</feature>
<feature type="region of interest" description="Disordered" evidence="5">
    <location>
        <begin position="1669"/>
        <end position="1695"/>
    </location>
</feature>
<feature type="short sequence motif" description="DEAH box">
    <location>
        <begin position="958"/>
        <end position="961"/>
    </location>
</feature>
<feature type="compositionally biased region" description="Polar residues" evidence="5">
    <location>
        <begin position="1"/>
        <end position="10"/>
    </location>
</feature>
<feature type="compositionally biased region" description="Basic and acidic residues" evidence="5">
    <location>
        <begin position="11"/>
        <end position="25"/>
    </location>
</feature>
<feature type="compositionally biased region" description="Polar residues" evidence="5">
    <location>
        <begin position="126"/>
        <end position="137"/>
    </location>
</feature>
<feature type="compositionally biased region" description="Polar residues" evidence="5">
    <location>
        <begin position="145"/>
        <end position="156"/>
    </location>
</feature>
<feature type="compositionally biased region" description="Low complexity" evidence="5">
    <location>
        <begin position="187"/>
        <end position="207"/>
    </location>
</feature>
<feature type="compositionally biased region" description="Acidic residues" evidence="5">
    <location>
        <begin position="499"/>
        <end position="514"/>
    </location>
</feature>
<feature type="compositionally biased region" description="Polar residues" evidence="5">
    <location>
        <begin position="538"/>
        <end position="554"/>
    </location>
</feature>
<feature type="compositionally biased region" description="Acidic residues" evidence="5">
    <location>
        <begin position="572"/>
        <end position="616"/>
    </location>
</feature>
<feature type="compositionally biased region" description="Basic and acidic residues" evidence="5">
    <location>
        <begin position="626"/>
        <end position="638"/>
    </location>
</feature>
<feature type="compositionally biased region" description="Acidic residues" evidence="5">
    <location>
        <begin position="656"/>
        <end position="678"/>
    </location>
</feature>
<feature type="compositionally biased region" description="Polar residues" evidence="5">
    <location>
        <begin position="685"/>
        <end position="697"/>
    </location>
</feature>
<feature type="compositionally biased region" description="Acidic residues" evidence="5">
    <location>
        <begin position="705"/>
        <end position="718"/>
    </location>
</feature>
<feature type="compositionally biased region" description="Basic residues" evidence="5">
    <location>
        <begin position="1678"/>
        <end position="1695"/>
    </location>
</feature>
<feature type="binding site" evidence="2">
    <location>
        <begin position="855"/>
        <end position="862"/>
    </location>
    <ligand>
        <name>ATP</name>
        <dbReference type="ChEBI" id="CHEBI:30616"/>
    </ligand>
</feature>
<dbReference type="EC" id="3.6.4.12"/>
<dbReference type="EMBL" id="AAHF01000015">
    <property type="protein sequence ID" value="EAL84657.1"/>
    <property type="molecule type" value="Genomic_DNA"/>
</dbReference>
<dbReference type="RefSeq" id="XP_746695.1">
    <property type="nucleotide sequence ID" value="XM_741602.1"/>
</dbReference>
<dbReference type="SMR" id="Q4WAS9"/>
<dbReference type="FunCoup" id="Q4WAS9">
    <property type="interactions" value="207"/>
</dbReference>
<dbReference type="STRING" id="330879.Q4WAS9"/>
<dbReference type="EnsemblFungi" id="EAL84657">
    <property type="protein sequence ID" value="EAL84657"/>
    <property type="gene ID" value="AFUA_7G02370"/>
</dbReference>
<dbReference type="GeneID" id="3504252"/>
<dbReference type="KEGG" id="afm:AFUA_7G02370"/>
<dbReference type="VEuPathDB" id="FungiDB:Afu7g02370"/>
<dbReference type="eggNOG" id="KOG0391">
    <property type="taxonomic scope" value="Eukaryota"/>
</dbReference>
<dbReference type="HOGENOM" id="CLU_000315_24_2_1"/>
<dbReference type="InParanoid" id="Q4WAS9"/>
<dbReference type="OMA" id="KLFAQWC"/>
<dbReference type="OrthoDB" id="372624at2759"/>
<dbReference type="Proteomes" id="UP000002530">
    <property type="component" value="Chromosome 7"/>
</dbReference>
<dbReference type="GO" id="GO:0000812">
    <property type="term" value="C:Swr1 complex"/>
    <property type="evidence" value="ECO:0000318"/>
    <property type="project" value="GO_Central"/>
</dbReference>
<dbReference type="GO" id="GO:0005524">
    <property type="term" value="F:ATP binding"/>
    <property type="evidence" value="ECO:0007669"/>
    <property type="project" value="UniProtKB-KW"/>
</dbReference>
<dbReference type="GO" id="GO:0016887">
    <property type="term" value="F:ATP hydrolysis activity"/>
    <property type="evidence" value="ECO:0000318"/>
    <property type="project" value="GO_Central"/>
</dbReference>
<dbReference type="GO" id="GO:0003677">
    <property type="term" value="F:DNA binding"/>
    <property type="evidence" value="ECO:0007669"/>
    <property type="project" value="UniProtKB-KW"/>
</dbReference>
<dbReference type="GO" id="GO:0004386">
    <property type="term" value="F:helicase activity"/>
    <property type="evidence" value="ECO:0007669"/>
    <property type="project" value="UniProtKB-KW"/>
</dbReference>
<dbReference type="GO" id="GO:0042393">
    <property type="term" value="F:histone binding"/>
    <property type="evidence" value="ECO:0000318"/>
    <property type="project" value="GO_Central"/>
</dbReference>
<dbReference type="GO" id="GO:0006338">
    <property type="term" value="P:chromatin remodeling"/>
    <property type="evidence" value="ECO:0000318"/>
    <property type="project" value="GO_Central"/>
</dbReference>
<dbReference type="CDD" id="cd18003">
    <property type="entry name" value="DEXQc_SRCAP"/>
    <property type="match status" value="1"/>
</dbReference>
<dbReference type="CDD" id="cd18793">
    <property type="entry name" value="SF2_C_SNF"/>
    <property type="match status" value="1"/>
</dbReference>
<dbReference type="FunFam" id="3.40.50.10810:FF:000005">
    <property type="entry name" value="Photoperiod-independent early flowering 1"/>
    <property type="match status" value="1"/>
</dbReference>
<dbReference type="FunFam" id="3.40.50.300:FF:000655">
    <property type="entry name" value="Protein PHOTOPERIOD-INDEPENDENT EARLY FLOWERING 1"/>
    <property type="match status" value="1"/>
</dbReference>
<dbReference type="FunFam" id="1.20.120.850:FF:000009">
    <property type="entry name" value="SNF2 family helicase/ATPase (Swr1)"/>
    <property type="match status" value="1"/>
</dbReference>
<dbReference type="Gene3D" id="3.40.50.300">
    <property type="entry name" value="P-loop containing nucleotide triphosphate hydrolases"/>
    <property type="match status" value="1"/>
</dbReference>
<dbReference type="Gene3D" id="1.20.120.850">
    <property type="entry name" value="SWI2/SNF2 ATPases, N-terminal domain"/>
    <property type="match status" value="1"/>
</dbReference>
<dbReference type="Gene3D" id="3.40.50.10810">
    <property type="entry name" value="Tandem AAA-ATPase domain"/>
    <property type="match status" value="1"/>
</dbReference>
<dbReference type="InterPro" id="IPR002464">
    <property type="entry name" value="DNA/RNA_helicase_DEAH_CS"/>
</dbReference>
<dbReference type="InterPro" id="IPR014001">
    <property type="entry name" value="Helicase_ATP-bd"/>
</dbReference>
<dbReference type="InterPro" id="IPR001650">
    <property type="entry name" value="Helicase_C-like"/>
</dbReference>
<dbReference type="InterPro" id="IPR014012">
    <property type="entry name" value="HSA_dom"/>
</dbReference>
<dbReference type="InterPro" id="IPR050520">
    <property type="entry name" value="INO80/SWR1_helicase"/>
</dbReference>
<dbReference type="InterPro" id="IPR027417">
    <property type="entry name" value="P-loop_NTPase"/>
</dbReference>
<dbReference type="InterPro" id="IPR038718">
    <property type="entry name" value="SNF2-like_sf"/>
</dbReference>
<dbReference type="InterPro" id="IPR049730">
    <property type="entry name" value="SNF2/RAD54-like_C"/>
</dbReference>
<dbReference type="InterPro" id="IPR000330">
    <property type="entry name" value="SNF2_N"/>
</dbReference>
<dbReference type="PANTHER" id="PTHR45685:SF1">
    <property type="entry name" value="HELICASE SRCAP"/>
    <property type="match status" value="1"/>
</dbReference>
<dbReference type="PANTHER" id="PTHR45685">
    <property type="entry name" value="HELICASE SRCAP-RELATED"/>
    <property type="match status" value="1"/>
</dbReference>
<dbReference type="Pfam" id="PF00271">
    <property type="entry name" value="Helicase_C"/>
    <property type="match status" value="1"/>
</dbReference>
<dbReference type="Pfam" id="PF07529">
    <property type="entry name" value="HSA"/>
    <property type="match status" value="1"/>
</dbReference>
<dbReference type="Pfam" id="PF00176">
    <property type="entry name" value="SNF2-rel_dom"/>
    <property type="match status" value="1"/>
</dbReference>
<dbReference type="SMART" id="SM00487">
    <property type="entry name" value="DEXDc"/>
    <property type="match status" value="1"/>
</dbReference>
<dbReference type="SMART" id="SM00490">
    <property type="entry name" value="HELICc"/>
    <property type="match status" value="1"/>
</dbReference>
<dbReference type="SUPFAM" id="SSF52540">
    <property type="entry name" value="P-loop containing nucleoside triphosphate hydrolases"/>
    <property type="match status" value="2"/>
</dbReference>
<dbReference type="PROSITE" id="PS00690">
    <property type="entry name" value="DEAH_ATP_HELICASE"/>
    <property type="match status" value="1"/>
</dbReference>
<dbReference type="PROSITE" id="PS51192">
    <property type="entry name" value="HELICASE_ATP_BIND_1"/>
    <property type="match status" value="1"/>
</dbReference>
<dbReference type="PROSITE" id="PS51194">
    <property type="entry name" value="HELICASE_CTER"/>
    <property type="match status" value="1"/>
</dbReference>
<dbReference type="PROSITE" id="PS51204">
    <property type="entry name" value="HSA"/>
    <property type="match status" value="1"/>
</dbReference>
<name>SWR1_ASPFU</name>